<feature type="chain" id="PRO_1000206493" description="Small ribosomal subunit protein bS20">
    <location>
        <begin position="1"/>
        <end position="91"/>
    </location>
</feature>
<feature type="region of interest" description="Disordered" evidence="2">
    <location>
        <begin position="1"/>
        <end position="26"/>
    </location>
</feature>
<feature type="region of interest" description="Disordered" evidence="2">
    <location>
        <begin position="67"/>
        <end position="91"/>
    </location>
</feature>
<reference key="1">
    <citation type="journal article" date="2009" name="PLoS Genet.">
        <title>Alliance of proteomics and genomics to unravel the specificities of Sahara bacterium Deinococcus deserti.</title>
        <authorList>
            <person name="de Groot A."/>
            <person name="Dulermo R."/>
            <person name="Ortet P."/>
            <person name="Blanchard L."/>
            <person name="Guerin P."/>
            <person name="Fernandez B."/>
            <person name="Vacherie B."/>
            <person name="Dossat C."/>
            <person name="Jolivet E."/>
            <person name="Siguier P."/>
            <person name="Chandler M."/>
            <person name="Barakat M."/>
            <person name="Dedieu A."/>
            <person name="Barbe V."/>
            <person name="Heulin T."/>
            <person name="Sommer S."/>
            <person name="Achouak W."/>
            <person name="Armengaud J."/>
        </authorList>
    </citation>
    <scope>NUCLEOTIDE SEQUENCE [LARGE SCALE GENOMIC DNA]</scope>
    <source>
        <strain>DSM 17065 / CIP 109153 / LMG 22923 / VCD115</strain>
    </source>
</reference>
<proteinExistence type="inferred from homology"/>
<name>RS20_DEIDV</name>
<protein>
    <recommendedName>
        <fullName evidence="1">Small ribosomal subunit protein bS20</fullName>
    </recommendedName>
    <alternativeName>
        <fullName evidence="3">30S ribosomal protein S20</fullName>
    </alternativeName>
</protein>
<accession>C1CVD5</accession>
<gene>
    <name evidence="1" type="primary">rpsT</name>
    <name type="ordered locus">Deide_12360</name>
</gene>
<keyword id="KW-1185">Reference proteome</keyword>
<keyword id="KW-0687">Ribonucleoprotein</keyword>
<keyword id="KW-0689">Ribosomal protein</keyword>
<keyword id="KW-0694">RNA-binding</keyword>
<keyword id="KW-0699">rRNA-binding</keyword>
<dbReference type="EMBL" id="CP001114">
    <property type="protein sequence ID" value="ACO46152.1"/>
    <property type="molecule type" value="Genomic_DNA"/>
</dbReference>
<dbReference type="RefSeq" id="WP_012693275.1">
    <property type="nucleotide sequence ID" value="NC_012526.1"/>
</dbReference>
<dbReference type="SMR" id="C1CVD5"/>
<dbReference type="STRING" id="546414.Deide_12360"/>
<dbReference type="PaxDb" id="546414-Deide_12360"/>
<dbReference type="KEGG" id="ddr:Deide_12360"/>
<dbReference type="eggNOG" id="COG0268">
    <property type="taxonomic scope" value="Bacteria"/>
</dbReference>
<dbReference type="HOGENOM" id="CLU_160655_3_1_0"/>
<dbReference type="OrthoDB" id="9807974at2"/>
<dbReference type="Proteomes" id="UP000002208">
    <property type="component" value="Chromosome"/>
</dbReference>
<dbReference type="GO" id="GO:0015935">
    <property type="term" value="C:small ribosomal subunit"/>
    <property type="evidence" value="ECO:0007669"/>
    <property type="project" value="TreeGrafter"/>
</dbReference>
<dbReference type="GO" id="GO:0070181">
    <property type="term" value="F:small ribosomal subunit rRNA binding"/>
    <property type="evidence" value="ECO:0007669"/>
    <property type="project" value="TreeGrafter"/>
</dbReference>
<dbReference type="GO" id="GO:0003735">
    <property type="term" value="F:structural constituent of ribosome"/>
    <property type="evidence" value="ECO:0007669"/>
    <property type="project" value="InterPro"/>
</dbReference>
<dbReference type="GO" id="GO:0006412">
    <property type="term" value="P:translation"/>
    <property type="evidence" value="ECO:0007669"/>
    <property type="project" value="UniProtKB-UniRule"/>
</dbReference>
<dbReference type="Gene3D" id="1.20.58.110">
    <property type="entry name" value="Ribosomal protein S20"/>
    <property type="match status" value="1"/>
</dbReference>
<dbReference type="HAMAP" id="MF_00500">
    <property type="entry name" value="Ribosomal_bS20"/>
    <property type="match status" value="1"/>
</dbReference>
<dbReference type="InterPro" id="IPR002583">
    <property type="entry name" value="Ribosomal_bS20"/>
</dbReference>
<dbReference type="InterPro" id="IPR036510">
    <property type="entry name" value="Ribosomal_bS20_sf"/>
</dbReference>
<dbReference type="NCBIfam" id="TIGR00029">
    <property type="entry name" value="S20"/>
    <property type="match status" value="1"/>
</dbReference>
<dbReference type="PANTHER" id="PTHR33398">
    <property type="entry name" value="30S RIBOSOMAL PROTEIN S20"/>
    <property type="match status" value="1"/>
</dbReference>
<dbReference type="PANTHER" id="PTHR33398:SF1">
    <property type="entry name" value="SMALL RIBOSOMAL SUBUNIT PROTEIN BS20C"/>
    <property type="match status" value="1"/>
</dbReference>
<dbReference type="Pfam" id="PF01649">
    <property type="entry name" value="Ribosomal_S20p"/>
    <property type="match status" value="1"/>
</dbReference>
<dbReference type="SUPFAM" id="SSF46992">
    <property type="entry name" value="Ribosomal protein S20"/>
    <property type="match status" value="1"/>
</dbReference>
<comment type="function">
    <text evidence="1">Binds directly to 16S ribosomal RNA.</text>
</comment>
<comment type="similarity">
    <text evidence="1">Belongs to the bacterial ribosomal protein bS20 family.</text>
</comment>
<evidence type="ECO:0000255" key="1">
    <source>
        <dbReference type="HAMAP-Rule" id="MF_00500"/>
    </source>
</evidence>
<evidence type="ECO:0000256" key="2">
    <source>
        <dbReference type="SAM" id="MobiDB-lite"/>
    </source>
</evidence>
<evidence type="ECO:0000305" key="3"/>
<organism>
    <name type="scientific">Deinococcus deserti (strain DSM 17065 / CIP 109153 / LMG 22923 / VCD115)</name>
    <dbReference type="NCBI Taxonomy" id="546414"/>
    <lineage>
        <taxon>Bacteria</taxon>
        <taxon>Thermotogati</taxon>
        <taxon>Deinococcota</taxon>
        <taxon>Deinococci</taxon>
        <taxon>Deinococcales</taxon>
        <taxon>Deinococcaceae</taxon>
        <taxon>Deinococcus</taxon>
    </lineage>
</organism>
<sequence>MALRHKSAQKRHRQSLKRRMLNRSRKSTIKTFTKQAVAAATTGENLAAAQSKAESLIDKAAKGSTLHKNAAARKKSRLAKAINRVKAAQQS</sequence>